<accession>B7HLE4</accession>
<dbReference type="EMBL" id="CP001177">
    <property type="protein sequence ID" value="ACJ81293.1"/>
    <property type="molecule type" value="Genomic_DNA"/>
</dbReference>
<dbReference type="SMR" id="B7HLE4"/>
<dbReference type="KEGG" id="bcr:BCAH187_A3858"/>
<dbReference type="HOGENOM" id="CLU_089475_6_3_9"/>
<dbReference type="Proteomes" id="UP000002214">
    <property type="component" value="Chromosome"/>
</dbReference>
<dbReference type="GO" id="GO:0005829">
    <property type="term" value="C:cytosol"/>
    <property type="evidence" value="ECO:0007669"/>
    <property type="project" value="TreeGrafter"/>
</dbReference>
<dbReference type="GO" id="GO:0043024">
    <property type="term" value="F:ribosomal small subunit binding"/>
    <property type="evidence" value="ECO:0007669"/>
    <property type="project" value="TreeGrafter"/>
</dbReference>
<dbReference type="GO" id="GO:0030490">
    <property type="term" value="P:maturation of SSU-rRNA"/>
    <property type="evidence" value="ECO:0007669"/>
    <property type="project" value="UniProtKB-UniRule"/>
</dbReference>
<dbReference type="FunFam" id="3.30.300.20:FF:000009">
    <property type="entry name" value="Ribosome-binding factor A"/>
    <property type="match status" value="1"/>
</dbReference>
<dbReference type="Gene3D" id="3.30.300.20">
    <property type="match status" value="1"/>
</dbReference>
<dbReference type="HAMAP" id="MF_00003">
    <property type="entry name" value="RbfA"/>
    <property type="match status" value="1"/>
</dbReference>
<dbReference type="InterPro" id="IPR015946">
    <property type="entry name" value="KH_dom-like_a/b"/>
</dbReference>
<dbReference type="InterPro" id="IPR000238">
    <property type="entry name" value="RbfA"/>
</dbReference>
<dbReference type="InterPro" id="IPR023799">
    <property type="entry name" value="RbfA_dom_sf"/>
</dbReference>
<dbReference type="InterPro" id="IPR020053">
    <property type="entry name" value="Ribosome-bd_factorA_CS"/>
</dbReference>
<dbReference type="NCBIfam" id="TIGR00082">
    <property type="entry name" value="rbfA"/>
    <property type="match status" value="1"/>
</dbReference>
<dbReference type="PANTHER" id="PTHR33515">
    <property type="entry name" value="RIBOSOME-BINDING FACTOR A, CHLOROPLASTIC-RELATED"/>
    <property type="match status" value="1"/>
</dbReference>
<dbReference type="PANTHER" id="PTHR33515:SF1">
    <property type="entry name" value="RIBOSOME-BINDING FACTOR A, CHLOROPLASTIC-RELATED"/>
    <property type="match status" value="1"/>
</dbReference>
<dbReference type="Pfam" id="PF02033">
    <property type="entry name" value="RBFA"/>
    <property type="match status" value="1"/>
</dbReference>
<dbReference type="SUPFAM" id="SSF89919">
    <property type="entry name" value="Ribosome-binding factor A, RbfA"/>
    <property type="match status" value="1"/>
</dbReference>
<dbReference type="PROSITE" id="PS01319">
    <property type="entry name" value="RBFA"/>
    <property type="match status" value="1"/>
</dbReference>
<comment type="function">
    <text evidence="1">One of several proteins that assist in the late maturation steps of the functional core of the 30S ribosomal subunit. Associates with free 30S ribosomal subunits (but not with 30S subunits that are part of 70S ribosomes or polysomes). Required for efficient processing of 16S rRNA. May interact with the 5'-terminal helix region of 16S rRNA.</text>
</comment>
<comment type="subunit">
    <text evidence="1">Monomer. Binds 30S ribosomal subunits, but not 50S ribosomal subunits or 70S ribosomes.</text>
</comment>
<comment type="subcellular location">
    <subcellularLocation>
        <location evidence="1">Cytoplasm</location>
    </subcellularLocation>
</comment>
<comment type="similarity">
    <text evidence="1">Belongs to the RbfA family.</text>
</comment>
<organism>
    <name type="scientific">Bacillus cereus (strain AH187)</name>
    <dbReference type="NCBI Taxonomy" id="405534"/>
    <lineage>
        <taxon>Bacteria</taxon>
        <taxon>Bacillati</taxon>
        <taxon>Bacillota</taxon>
        <taxon>Bacilli</taxon>
        <taxon>Bacillales</taxon>
        <taxon>Bacillaceae</taxon>
        <taxon>Bacillus</taxon>
        <taxon>Bacillus cereus group</taxon>
    </lineage>
</organism>
<proteinExistence type="inferred from homology"/>
<evidence type="ECO:0000255" key="1">
    <source>
        <dbReference type="HAMAP-Rule" id="MF_00003"/>
    </source>
</evidence>
<name>RBFA_BACC7</name>
<keyword id="KW-0963">Cytoplasm</keyword>
<keyword id="KW-0690">Ribosome biogenesis</keyword>
<feature type="chain" id="PRO_1000193228" description="Ribosome-binding factor A">
    <location>
        <begin position="1"/>
        <end position="118"/>
    </location>
</feature>
<gene>
    <name evidence="1" type="primary">rbfA</name>
    <name type="ordered locus">BCAH187_A3858</name>
</gene>
<protein>
    <recommendedName>
        <fullName evidence="1">Ribosome-binding factor A</fullName>
    </recommendedName>
</protein>
<sequence>MKLRANRVGEQMKKELGDIISRKIKDPRVGFVTVTDVQVSGDLQIATVYISVLGDEEQKDSTLKGLAKAKGFIRSEIGQRIRLRKTPEISFEFDESIGYGHRIDTLLHEINKEGKREE</sequence>
<reference key="1">
    <citation type="submission" date="2008-10" db="EMBL/GenBank/DDBJ databases">
        <title>Genome sequence of Bacillus cereus AH187.</title>
        <authorList>
            <person name="Dodson R.J."/>
            <person name="Durkin A.S."/>
            <person name="Rosovitz M.J."/>
            <person name="Rasko D.A."/>
            <person name="Kolsto A.B."/>
            <person name="Okstad O.A."/>
            <person name="Ravel J."/>
            <person name="Sutton G."/>
        </authorList>
    </citation>
    <scope>NUCLEOTIDE SEQUENCE [LARGE SCALE GENOMIC DNA]</scope>
    <source>
        <strain>AH187</strain>
    </source>
</reference>